<gene>
    <name type="ORF">GH10624</name>
</gene>
<evidence type="ECO:0000255" key="1">
    <source>
        <dbReference type="HAMAP-Rule" id="MF_03054"/>
    </source>
</evidence>
<comment type="function">
    <text evidence="1">Plays a central role in 2-thiolation of mcm(5)S(2)U at tRNA wobble positions of tRNA(Lys), tRNA(Glu) and tRNA(Gln). May act by forming a heterodimer with NCS6/CTU1 that ligates sulfur from thiocarboxylated URM1 onto the uridine of tRNAs at wobble position.</text>
</comment>
<comment type="pathway">
    <text evidence="1">tRNA modification; 5-methoxycarbonylmethyl-2-thiouridine-tRNA biosynthesis.</text>
</comment>
<comment type="subcellular location">
    <subcellularLocation>
        <location evidence="1">Cytoplasm</location>
    </subcellularLocation>
</comment>
<comment type="similarity">
    <text evidence="1">Belongs to the CTU2/NCS2 family.</text>
</comment>
<dbReference type="EMBL" id="CH916368">
    <property type="protein sequence ID" value="EDW03197.1"/>
    <property type="molecule type" value="Genomic_DNA"/>
</dbReference>
<dbReference type="SMR" id="B4JCV8"/>
<dbReference type="FunCoup" id="B4JCV8">
    <property type="interactions" value="1745"/>
</dbReference>
<dbReference type="STRING" id="7222.B4JCV8"/>
<dbReference type="EnsemblMetazoa" id="FBtr0146038">
    <property type="protein sequence ID" value="FBpp0144530"/>
    <property type="gene ID" value="FBgn0118105"/>
</dbReference>
<dbReference type="EnsemblMetazoa" id="XM_001988294.3">
    <property type="protein sequence ID" value="XP_001988330.1"/>
    <property type="gene ID" value="LOC6562494"/>
</dbReference>
<dbReference type="GeneID" id="6562494"/>
<dbReference type="KEGG" id="dgr:6562494"/>
<dbReference type="CTD" id="348180"/>
<dbReference type="eggNOG" id="KOG2594">
    <property type="taxonomic scope" value="Eukaryota"/>
</dbReference>
<dbReference type="HOGENOM" id="CLU_024534_2_1_1"/>
<dbReference type="InParanoid" id="B4JCV8"/>
<dbReference type="OMA" id="CHACRNI"/>
<dbReference type="OrthoDB" id="25129at2759"/>
<dbReference type="PhylomeDB" id="B4JCV8"/>
<dbReference type="UniPathway" id="UPA00988"/>
<dbReference type="Proteomes" id="UP000001070">
    <property type="component" value="Unassembled WGS sequence"/>
</dbReference>
<dbReference type="GO" id="GO:0005829">
    <property type="term" value="C:cytosol"/>
    <property type="evidence" value="ECO:0000250"/>
    <property type="project" value="UniProtKB"/>
</dbReference>
<dbReference type="GO" id="GO:0016779">
    <property type="term" value="F:nucleotidyltransferase activity"/>
    <property type="evidence" value="ECO:0007669"/>
    <property type="project" value="UniProtKB-UniRule"/>
</dbReference>
<dbReference type="GO" id="GO:0016783">
    <property type="term" value="F:sulfurtransferase activity"/>
    <property type="evidence" value="ECO:0007669"/>
    <property type="project" value="TreeGrafter"/>
</dbReference>
<dbReference type="GO" id="GO:0000049">
    <property type="term" value="F:tRNA binding"/>
    <property type="evidence" value="ECO:0007669"/>
    <property type="project" value="InterPro"/>
</dbReference>
<dbReference type="GO" id="GO:0032447">
    <property type="term" value="P:protein urmylation"/>
    <property type="evidence" value="ECO:0007669"/>
    <property type="project" value="UniProtKB-UniRule"/>
</dbReference>
<dbReference type="GO" id="GO:0034227">
    <property type="term" value="P:tRNA thio-modification"/>
    <property type="evidence" value="ECO:0000250"/>
    <property type="project" value="UniProtKB"/>
</dbReference>
<dbReference type="GO" id="GO:0002143">
    <property type="term" value="P:tRNA wobble position uridine thiolation"/>
    <property type="evidence" value="ECO:0007669"/>
    <property type="project" value="TreeGrafter"/>
</dbReference>
<dbReference type="GO" id="GO:0002098">
    <property type="term" value="P:tRNA wobble uridine modification"/>
    <property type="evidence" value="ECO:0000250"/>
    <property type="project" value="UniProtKB"/>
</dbReference>
<dbReference type="FunFam" id="3.40.50.620:FF:000229">
    <property type="entry name" value="Cytoplasmic tRNA 2-thiolation protein 2"/>
    <property type="match status" value="1"/>
</dbReference>
<dbReference type="Gene3D" id="3.40.50.620">
    <property type="entry name" value="HUPs"/>
    <property type="match status" value="1"/>
</dbReference>
<dbReference type="HAMAP" id="MF_03054">
    <property type="entry name" value="CTU2"/>
    <property type="match status" value="1"/>
</dbReference>
<dbReference type="InterPro" id="IPR019407">
    <property type="entry name" value="CTU2"/>
</dbReference>
<dbReference type="InterPro" id="IPR014729">
    <property type="entry name" value="Rossmann-like_a/b/a_fold"/>
</dbReference>
<dbReference type="PANTHER" id="PTHR20882">
    <property type="entry name" value="CYTOPLASMIC TRNA 2-THIOLATION PROTEIN 2"/>
    <property type="match status" value="1"/>
</dbReference>
<dbReference type="PANTHER" id="PTHR20882:SF14">
    <property type="entry name" value="CYTOPLASMIC TRNA 2-THIOLATION PROTEIN 2"/>
    <property type="match status" value="1"/>
</dbReference>
<dbReference type="Pfam" id="PF10288">
    <property type="entry name" value="CTU2"/>
    <property type="match status" value="1"/>
</dbReference>
<sequence length="397" mass="43383">MCSIGEDDFGDEGATHAMLPGSSATGTVLSAGSCSKCNLASDELYKLNFRAAECQLCFLSYARHKFRAALGAAKALPRSAEVLLLVDGSGASLVLLDMLHFAQTQNTFKRLHCNARVLYIDACGNDSLSSLHKLHERYAPFEFYVIQLNAEPKSLQSLKEYSASIVNATQQELRSLTARQDYGLQQRKRLIGAVAAHLQCSHVFESSISSTLATQLLTSVALGRGGSVALDVALLDDRLQDDIKLLRPLKDLNEQEVQFYVHAQQLQPFTSENELDQSSAASLQNLTSAFVANLQINYASTVSTIFRTGDKIAAKQQTNVDPTTTCTLCHSVLDHQLSDTLLAIEYSRAVSEMGVALQQHDNMEALEQRARQRLTAAQDLCHACRNIQAELTSGNIP</sequence>
<feature type="chain" id="PRO_0000369272" description="Cytoplasmic tRNA 2-thiolation protein 2">
    <location>
        <begin position="1"/>
        <end position="397"/>
    </location>
</feature>
<name>CTU2_DROGR</name>
<proteinExistence type="inferred from homology"/>
<organism>
    <name type="scientific">Drosophila grimshawi</name>
    <name type="common">Hawaiian fruit fly</name>
    <name type="synonym">Idiomyia grimshawi</name>
    <dbReference type="NCBI Taxonomy" id="7222"/>
    <lineage>
        <taxon>Eukaryota</taxon>
        <taxon>Metazoa</taxon>
        <taxon>Ecdysozoa</taxon>
        <taxon>Arthropoda</taxon>
        <taxon>Hexapoda</taxon>
        <taxon>Insecta</taxon>
        <taxon>Pterygota</taxon>
        <taxon>Neoptera</taxon>
        <taxon>Endopterygota</taxon>
        <taxon>Diptera</taxon>
        <taxon>Brachycera</taxon>
        <taxon>Muscomorpha</taxon>
        <taxon>Ephydroidea</taxon>
        <taxon>Drosophilidae</taxon>
        <taxon>Drosophila</taxon>
        <taxon>Hawaiian Drosophila</taxon>
    </lineage>
</organism>
<accession>B4JCV8</accession>
<protein>
    <recommendedName>
        <fullName evidence="1">Cytoplasmic tRNA 2-thiolation protein 2</fullName>
    </recommendedName>
</protein>
<reference key="1">
    <citation type="journal article" date="2007" name="Nature">
        <title>Evolution of genes and genomes on the Drosophila phylogeny.</title>
        <authorList>
            <consortium name="Drosophila 12 genomes consortium"/>
        </authorList>
    </citation>
    <scope>NUCLEOTIDE SEQUENCE [LARGE SCALE GENOMIC DNA]</scope>
    <source>
        <strain>Tucson 15287-2541.00</strain>
    </source>
</reference>
<keyword id="KW-0963">Cytoplasm</keyword>
<keyword id="KW-1185">Reference proteome</keyword>
<keyword id="KW-0819">tRNA processing</keyword>